<reference key="1">
    <citation type="journal article" date="2005" name="Science">
        <title>The transcriptional landscape of the mammalian genome.</title>
        <authorList>
            <person name="Carninci P."/>
            <person name="Kasukawa T."/>
            <person name="Katayama S."/>
            <person name="Gough J."/>
            <person name="Frith M.C."/>
            <person name="Maeda N."/>
            <person name="Oyama R."/>
            <person name="Ravasi T."/>
            <person name="Lenhard B."/>
            <person name="Wells C."/>
            <person name="Kodzius R."/>
            <person name="Shimokawa K."/>
            <person name="Bajic V.B."/>
            <person name="Brenner S.E."/>
            <person name="Batalov S."/>
            <person name="Forrest A.R."/>
            <person name="Zavolan M."/>
            <person name="Davis M.J."/>
            <person name="Wilming L.G."/>
            <person name="Aidinis V."/>
            <person name="Allen J.E."/>
            <person name="Ambesi-Impiombato A."/>
            <person name="Apweiler R."/>
            <person name="Aturaliya R.N."/>
            <person name="Bailey T.L."/>
            <person name="Bansal M."/>
            <person name="Baxter L."/>
            <person name="Beisel K.W."/>
            <person name="Bersano T."/>
            <person name="Bono H."/>
            <person name="Chalk A.M."/>
            <person name="Chiu K.P."/>
            <person name="Choudhary V."/>
            <person name="Christoffels A."/>
            <person name="Clutterbuck D.R."/>
            <person name="Crowe M.L."/>
            <person name="Dalla E."/>
            <person name="Dalrymple B.P."/>
            <person name="de Bono B."/>
            <person name="Della Gatta G."/>
            <person name="di Bernardo D."/>
            <person name="Down T."/>
            <person name="Engstrom P."/>
            <person name="Fagiolini M."/>
            <person name="Faulkner G."/>
            <person name="Fletcher C.F."/>
            <person name="Fukushima T."/>
            <person name="Furuno M."/>
            <person name="Futaki S."/>
            <person name="Gariboldi M."/>
            <person name="Georgii-Hemming P."/>
            <person name="Gingeras T.R."/>
            <person name="Gojobori T."/>
            <person name="Green R.E."/>
            <person name="Gustincich S."/>
            <person name="Harbers M."/>
            <person name="Hayashi Y."/>
            <person name="Hensch T.K."/>
            <person name="Hirokawa N."/>
            <person name="Hill D."/>
            <person name="Huminiecki L."/>
            <person name="Iacono M."/>
            <person name="Ikeo K."/>
            <person name="Iwama A."/>
            <person name="Ishikawa T."/>
            <person name="Jakt M."/>
            <person name="Kanapin A."/>
            <person name="Katoh M."/>
            <person name="Kawasawa Y."/>
            <person name="Kelso J."/>
            <person name="Kitamura H."/>
            <person name="Kitano H."/>
            <person name="Kollias G."/>
            <person name="Krishnan S.P."/>
            <person name="Kruger A."/>
            <person name="Kummerfeld S.K."/>
            <person name="Kurochkin I.V."/>
            <person name="Lareau L.F."/>
            <person name="Lazarevic D."/>
            <person name="Lipovich L."/>
            <person name="Liu J."/>
            <person name="Liuni S."/>
            <person name="McWilliam S."/>
            <person name="Madan Babu M."/>
            <person name="Madera M."/>
            <person name="Marchionni L."/>
            <person name="Matsuda H."/>
            <person name="Matsuzawa S."/>
            <person name="Miki H."/>
            <person name="Mignone F."/>
            <person name="Miyake S."/>
            <person name="Morris K."/>
            <person name="Mottagui-Tabar S."/>
            <person name="Mulder N."/>
            <person name="Nakano N."/>
            <person name="Nakauchi H."/>
            <person name="Ng P."/>
            <person name="Nilsson R."/>
            <person name="Nishiguchi S."/>
            <person name="Nishikawa S."/>
            <person name="Nori F."/>
            <person name="Ohara O."/>
            <person name="Okazaki Y."/>
            <person name="Orlando V."/>
            <person name="Pang K.C."/>
            <person name="Pavan W.J."/>
            <person name="Pavesi G."/>
            <person name="Pesole G."/>
            <person name="Petrovsky N."/>
            <person name="Piazza S."/>
            <person name="Reed J."/>
            <person name="Reid J.F."/>
            <person name="Ring B.Z."/>
            <person name="Ringwald M."/>
            <person name="Rost B."/>
            <person name="Ruan Y."/>
            <person name="Salzberg S.L."/>
            <person name="Sandelin A."/>
            <person name="Schneider C."/>
            <person name="Schoenbach C."/>
            <person name="Sekiguchi K."/>
            <person name="Semple C.A."/>
            <person name="Seno S."/>
            <person name="Sessa L."/>
            <person name="Sheng Y."/>
            <person name="Shibata Y."/>
            <person name="Shimada H."/>
            <person name="Shimada K."/>
            <person name="Silva D."/>
            <person name="Sinclair B."/>
            <person name="Sperling S."/>
            <person name="Stupka E."/>
            <person name="Sugiura K."/>
            <person name="Sultana R."/>
            <person name="Takenaka Y."/>
            <person name="Taki K."/>
            <person name="Tammoja K."/>
            <person name="Tan S.L."/>
            <person name="Tang S."/>
            <person name="Taylor M.S."/>
            <person name="Tegner J."/>
            <person name="Teichmann S.A."/>
            <person name="Ueda H.R."/>
            <person name="van Nimwegen E."/>
            <person name="Verardo R."/>
            <person name="Wei C.L."/>
            <person name="Yagi K."/>
            <person name="Yamanishi H."/>
            <person name="Zabarovsky E."/>
            <person name="Zhu S."/>
            <person name="Zimmer A."/>
            <person name="Hide W."/>
            <person name="Bult C."/>
            <person name="Grimmond S.M."/>
            <person name="Teasdale R.D."/>
            <person name="Liu E.T."/>
            <person name="Brusic V."/>
            <person name="Quackenbush J."/>
            <person name="Wahlestedt C."/>
            <person name="Mattick J.S."/>
            <person name="Hume D.A."/>
            <person name="Kai C."/>
            <person name="Sasaki D."/>
            <person name="Tomaru Y."/>
            <person name="Fukuda S."/>
            <person name="Kanamori-Katayama M."/>
            <person name="Suzuki M."/>
            <person name="Aoki J."/>
            <person name="Arakawa T."/>
            <person name="Iida J."/>
            <person name="Imamura K."/>
            <person name="Itoh M."/>
            <person name="Kato T."/>
            <person name="Kawaji H."/>
            <person name="Kawagashira N."/>
            <person name="Kawashima T."/>
            <person name="Kojima M."/>
            <person name="Kondo S."/>
            <person name="Konno H."/>
            <person name="Nakano K."/>
            <person name="Ninomiya N."/>
            <person name="Nishio T."/>
            <person name="Okada M."/>
            <person name="Plessy C."/>
            <person name="Shibata K."/>
            <person name="Shiraki T."/>
            <person name="Suzuki S."/>
            <person name="Tagami M."/>
            <person name="Waki K."/>
            <person name="Watahiki A."/>
            <person name="Okamura-Oho Y."/>
            <person name="Suzuki H."/>
            <person name="Kawai J."/>
            <person name="Hayashizaki Y."/>
        </authorList>
    </citation>
    <scope>NUCLEOTIDE SEQUENCE [LARGE SCALE MRNA]</scope>
    <source>
        <strain>C57BL/6J</strain>
        <strain>NOD</strain>
        <tissue>Amnion</tissue>
        <tissue>Colon</tissue>
        <tissue>Spleen</tissue>
    </source>
</reference>
<reference key="2">
    <citation type="journal article" date="2004" name="Genome Res.">
        <title>The status, quality, and expansion of the NIH full-length cDNA project: the Mammalian Gene Collection (MGC).</title>
        <authorList>
            <consortium name="The MGC Project Team"/>
        </authorList>
    </citation>
    <scope>NUCLEOTIDE SEQUENCE [LARGE SCALE MRNA] OF 79-709</scope>
    <source>
        <strain>FVB/N</strain>
        <tissue>Kidney</tissue>
    </source>
</reference>
<reference key="3">
    <citation type="journal article" date="2010" name="Cell">
        <title>A tissue-specific atlas of mouse protein phosphorylation and expression.</title>
        <authorList>
            <person name="Huttlin E.L."/>
            <person name="Jedrychowski M.P."/>
            <person name="Elias J.E."/>
            <person name="Goswami T."/>
            <person name="Rad R."/>
            <person name="Beausoleil S.A."/>
            <person name="Villen J."/>
            <person name="Haas W."/>
            <person name="Sowa M.E."/>
            <person name="Gygi S.P."/>
        </authorList>
    </citation>
    <scope>IDENTIFICATION BY MASS SPECTROMETRY [LARGE SCALE ANALYSIS]</scope>
    <source>
        <tissue>Lung</tissue>
        <tissue>Pancreas</tissue>
        <tissue>Spleen</tissue>
        <tissue>Testis</tissue>
    </source>
</reference>
<reference key="4">
    <citation type="journal article" date="2019" name="Genes Dev.">
        <title>ZCCHC8, the nuclear exosome targeting component, is mutated in familial pulmonary fibrosis and is required for telomerase RNA maturation.</title>
        <authorList>
            <person name="Gable D.L."/>
            <person name="Gaysinskaya V."/>
            <person name="Atik C.C."/>
            <person name="Talbot C.C. Jr."/>
            <person name="Kang B."/>
            <person name="Stanley S.E."/>
            <person name="Pugh E.W."/>
            <person name="Amat-Codina N."/>
            <person name="Schenk K.M."/>
            <person name="Arcasoy M.O."/>
            <person name="Brayton C."/>
            <person name="Florea L."/>
            <person name="Armanios M."/>
        </authorList>
    </citation>
    <scope>DISRUPTION PHENOTYPE</scope>
</reference>
<proteinExistence type="evidence at protein level"/>
<accession>Q9CYA6</accession>
<accession>Q3TK71</accession>
<accession>Q8CCB7</accession>
<accession>Q91WQ1</accession>
<dbReference type="EMBL" id="AK017857">
    <property type="protein sequence ID" value="BAB30977.2"/>
    <property type="molecule type" value="mRNA"/>
</dbReference>
<dbReference type="EMBL" id="AK033469">
    <property type="protein sequence ID" value="BAC28304.1"/>
    <property type="molecule type" value="mRNA"/>
</dbReference>
<dbReference type="EMBL" id="AK156770">
    <property type="protein sequence ID" value="BAE33847.1"/>
    <property type="molecule type" value="mRNA"/>
</dbReference>
<dbReference type="EMBL" id="AK167126">
    <property type="protein sequence ID" value="BAE39274.1"/>
    <property type="molecule type" value="mRNA"/>
</dbReference>
<dbReference type="EMBL" id="AK167736">
    <property type="protein sequence ID" value="BAE39776.1"/>
    <property type="molecule type" value="mRNA"/>
</dbReference>
<dbReference type="EMBL" id="BC013555">
    <property type="protein sequence ID" value="AAH13555.1"/>
    <property type="molecule type" value="mRNA"/>
</dbReference>
<dbReference type="CCDS" id="CCDS80406.1"/>
<dbReference type="RefSeq" id="NP_081770.3">
    <property type="nucleotide sequence ID" value="NM_027494.3"/>
</dbReference>
<dbReference type="SMR" id="Q9CYA6"/>
<dbReference type="BioGRID" id="214189">
    <property type="interactions" value="10"/>
</dbReference>
<dbReference type="FunCoup" id="Q9CYA6">
    <property type="interactions" value="3975"/>
</dbReference>
<dbReference type="IntAct" id="Q9CYA6">
    <property type="interactions" value="3"/>
</dbReference>
<dbReference type="MINT" id="Q9CYA6"/>
<dbReference type="STRING" id="10090.ENSMUSP00000142363"/>
<dbReference type="GlyGen" id="Q9CYA6">
    <property type="glycosylation" value="2 sites, 1 N-linked glycan (1 site), 1 O-linked glycan (1 site)"/>
</dbReference>
<dbReference type="iPTMnet" id="Q9CYA6"/>
<dbReference type="PhosphoSitePlus" id="Q9CYA6"/>
<dbReference type="SwissPalm" id="Q9CYA6"/>
<dbReference type="jPOST" id="Q9CYA6"/>
<dbReference type="PaxDb" id="10090-ENSMUSP00000031376"/>
<dbReference type="ProteomicsDB" id="298509"/>
<dbReference type="Pumba" id="Q9CYA6"/>
<dbReference type="Antibodypedia" id="31655">
    <property type="antibodies" value="115 antibodies from 22 providers"/>
</dbReference>
<dbReference type="DNASU" id="70650"/>
<dbReference type="Ensembl" id="ENSMUST00000196282.5">
    <property type="protein sequence ID" value="ENSMUSP00000142363.2"/>
    <property type="gene ID" value="ENSMUSG00000029427.13"/>
</dbReference>
<dbReference type="GeneID" id="70650"/>
<dbReference type="KEGG" id="mmu:70650"/>
<dbReference type="UCSC" id="uc008zoh.2">
    <property type="organism name" value="mouse"/>
</dbReference>
<dbReference type="AGR" id="MGI:1917900"/>
<dbReference type="CTD" id="55596"/>
<dbReference type="MGI" id="MGI:1917900">
    <property type="gene designation" value="Zcchc8"/>
</dbReference>
<dbReference type="VEuPathDB" id="HostDB:ENSMUSG00000029427"/>
<dbReference type="eggNOG" id="KOG2673">
    <property type="taxonomic scope" value="Eukaryota"/>
</dbReference>
<dbReference type="GeneTree" id="ENSGT00390000011475"/>
<dbReference type="InParanoid" id="Q9CYA6"/>
<dbReference type="OMA" id="DAEVPHG"/>
<dbReference type="OrthoDB" id="8026949at2759"/>
<dbReference type="PhylomeDB" id="Q9CYA6"/>
<dbReference type="TreeFam" id="TF321837"/>
<dbReference type="BioGRID-ORCS" id="70650">
    <property type="hits" value="14 hits in 71 CRISPR screens"/>
</dbReference>
<dbReference type="PRO" id="PR:Q9CYA6"/>
<dbReference type="Proteomes" id="UP000000589">
    <property type="component" value="Chromosome 5"/>
</dbReference>
<dbReference type="RNAct" id="Q9CYA6">
    <property type="molecule type" value="protein"/>
</dbReference>
<dbReference type="Bgee" id="ENSMUSG00000029427">
    <property type="expression patterns" value="Expressed in animal zygote and 256 other cell types or tissues"/>
</dbReference>
<dbReference type="ExpressionAtlas" id="Q9CYA6">
    <property type="expression patterns" value="baseline and differential"/>
</dbReference>
<dbReference type="GO" id="GO:0071013">
    <property type="term" value="C:catalytic step 2 spliceosome"/>
    <property type="evidence" value="ECO:0007669"/>
    <property type="project" value="Ensembl"/>
</dbReference>
<dbReference type="GO" id="GO:0016604">
    <property type="term" value="C:nuclear body"/>
    <property type="evidence" value="ECO:0007669"/>
    <property type="project" value="Ensembl"/>
</dbReference>
<dbReference type="GO" id="GO:0005654">
    <property type="term" value="C:nucleoplasm"/>
    <property type="evidence" value="ECO:0000250"/>
    <property type="project" value="UniProtKB"/>
</dbReference>
<dbReference type="GO" id="GO:0031499">
    <property type="term" value="C:TRAMP complex"/>
    <property type="evidence" value="ECO:0007669"/>
    <property type="project" value="Ensembl"/>
</dbReference>
<dbReference type="GO" id="GO:0003723">
    <property type="term" value="F:RNA binding"/>
    <property type="evidence" value="ECO:0007669"/>
    <property type="project" value="Ensembl"/>
</dbReference>
<dbReference type="GO" id="GO:0008270">
    <property type="term" value="F:zinc ion binding"/>
    <property type="evidence" value="ECO:0007669"/>
    <property type="project" value="UniProtKB-KW"/>
</dbReference>
<dbReference type="GO" id="GO:0180034">
    <property type="term" value="P:co-transcriptional lncRNA 3' end processing, cleavage and polyadenylation pathway"/>
    <property type="evidence" value="ECO:0007669"/>
    <property type="project" value="Ensembl"/>
</dbReference>
<dbReference type="GO" id="GO:0031124">
    <property type="term" value="P:mRNA 3'-end processing"/>
    <property type="evidence" value="ECO:0000250"/>
    <property type="project" value="UniProtKB"/>
</dbReference>
<dbReference type="GO" id="GO:0008380">
    <property type="term" value="P:RNA splicing"/>
    <property type="evidence" value="ECO:0007669"/>
    <property type="project" value="UniProtKB-KW"/>
</dbReference>
<dbReference type="InterPro" id="IPR052115">
    <property type="entry name" value="NEXT_complex_subunit_ZCCHC8"/>
</dbReference>
<dbReference type="InterPro" id="IPR006568">
    <property type="entry name" value="PSP_pro-rich"/>
</dbReference>
<dbReference type="InterPro" id="IPR001878">
    <property type="entry name" value="Znf_CCHC"/>
</dbReference>
<dbReference type="PANTHER" id="PTHR13316:SF0">
    <property type="entry name" value="ZINC FINGER CCHC DOMAIN-CONTAINING PROTEIN 8"/>
    <property type="match status" value="1"/>
</dbReference>
<dbReference type="PANTHER" id="PTHR13316">
    <property type="entry name" value="ZINC FINGER, CCHC DOMAIN CONTAINING 8"/>
    <property type="match status" value="1"/>
</dbReference>
<dbReference type="Pfam" id="PF04046">
    <property type="entry name" value="PSP"/>
    <property type="match status" value="1"/>
</dbReference>
<dbReference type="Pfam" id="PF00098">
    <property type="entry name" value="zf-CCHC"/>
    <property type="match status" value="1"/>
</dbReference>
<dbReference type="SMART" id="SM00581">
    <property type="entry name" value="PSP"/>
    <property type="match status" value="1"/>
</dbReference>
<dbReference type="SMART" id="SM00343">
    <property type="entry name" value="ZnF_C2HC"/>
    <property type="match status" value="1"/>
</dbReference>
<dbReference type="PROSITE" id="PS50158">
    <property type="entry name" value="ZF_CCHC"/>
    <property type="match status" value="1"/>
</dbReference>
<comment type="function">
    <text evidence="1">Scaffolding subunit of the trimeric nuclear exosome targeting (NEXT) complex that is involved in the surveillance and turnover of aberrant transcripts and non-coding RNAs. NEXT functions as an RNA exosome cofactor that directs a subset of non-coding short-lived RNAs for exosomal degradation. May be involved in pre-mRNA splicing. It is required for 3'-end maturation of telomerase RNA component (TERC), TERC 3'-end targeting to the nuclear RNA exosome, and for telomerase function.</text>
</comment>
<comment type="subunit">
    <text evidence="1">Component of a nuclear TRAMP-like complex, an ATP-dependent exosome regulatory complex consisting of a helicase (MTREX), an oligadenylate polymerase (TENT4B or TENT4A), and a substrate specific RNA-binding factor (ZCCHC7 or ZCCHC8). Several TRAMP-like complexes exist with specific compositions and are associated with nuclear, or nucleolar RNA exosomes. Identified in the spliceosome C complex. Component of the nuclear exosome targeting (NEXT) complex composed of MTREX, ZCCHC8, and RBM7 that directs a subset of non-coding short-lived RNAs for exosomal degradation. Interacts with proteins involved in RNA processing and degradation such as MTREX and RBM7; interaction with MTREX enhances MTREX RNA helicase activity and bridges between RBM7 and MTREX. Interacts with TERC, the telomerase RNA component.</text>
</comment>
<comment type="subcellular location">
    <subcellularLocation>
        <location evidence="1">Nucleus</location>
        <location evidence="1">Nucleoplasm</location>
    </subcellularLocation>
    <text evidence="1">Excluded from nucleolus.</text>
</comment>
<comment type="domain">
    <text evidence="1">The C-terminal part (659-707) contributes to MTREX RNA helicase activity, in part, by enhancing its RNA-dependent ATPase activity.</text>
</comment>
<comment type="PTM">
    <text evidence="1">Phosphorylation at Thr-495 by GSK3 is triggered in cells entering mitosis.</text>
</comment>
<comment type="disruption phenotype">
    <text evidence="5">ZCCHC8-null mice have a small brain volume, cranial deformities with domed-shaped heads, and severe hydrocephalus with ventriculomegaly. Defective turnover of low abundance RNA polymerase II transcripts is detected in developing brain of knockout animals.</text>
</comment>
<comment type="similarity">
    <text evidence="6">Belongs to the ZCCHC8 family.</text>
</comment>
<organism>
    <name type="scientific">Mus musculus</name>
    <name type="common">Mouse</name>
    <dbReference type="NCBI Taxonomy" id="10090"/>
    <lineage>
        <taxon>Eukaryota</taxon>
        <taxon>Metazoa</taxon>
        <taxon>Chordata</taxon>
        <taxon>Craniata</taxon>
        <taxon>Vertebrata</taxon>
        <taxon>Euteleostomi</taxon>
        <taxon>Mammalia</taxon>
        <taxon>Eutheria</taxon>
        <taxon>Euarchontoglires</taxon>
        <taxon>Glires</taxon>
        <taxon>Rodentia</taxon>
        <taxon>Myomorpha</taxon>
        <taxon>Muroidea</taxon>
        <taxon>Muridae</taxon>
        <taxon>Murinae</taxon>
        <taxon>Mus</taxon>
        <taxon>Mus</taxon>
    </lineage>
</organism>
<sequence length="709" mass="78026">MAAGVDFGDLELFEAFDPPEESTPKPVHTRFKDDEEEEDDDDDENGVGDAELQEQLRRCEATIEQLRAENQELKRKLNILTRPSGILVSNTKIDGPLLQILFMNNAISKQYHQEIEEFVSNLVKRFEEQQKNDVEKTSFSLLPQPSSVMLEEDHKVEESCAVKNNKEAFSVVGSVLYFTNFCLDKLGQPLLNENPQLTEGWEIPKYQQVFSHIVPLEGQEMQVKAKRPKPHCFNCGSEEHQMKECPMPRNAARISEKRKEYMDACGEASGQSFQQRYHAEEVEERFGRFKPGVISEELQDALGVTDKSLPPFIYRMRQLGYPPGWLKEAELENSGLALYDGNDDADGETETGEIQNKNVTYDLSKLVNYPGFNISTPRGIPDEWRMFGSIPMQACQQKDVFASYLNSNIQSPSMRSSGKRSSSQSSPNSPKKQRKEGSAAASPADMELDSDVEIPPGSQSSKAFQFQPPLPPGTPPPLPQGTPPPLFTPPLPKGTPPLTPSDSPQARPAASAMDEDALTLEELEEQQRQIWAALQQAEGGNGDSDVPGDTPLTGNSVASSPCPNEFDLPVPEGKALEKPVLAEPQEPAASVDTAGPEPSCSPAAGAAVLSQREEEAAAEGGPGDALLDNGGVLNMNMSNGSNQQPIHPDSRPPMAPKTHSPVPDMSKFATGITPFEFENMAESTGMYLRIRNLLKNSPRNQQKNKKTCE</sequence>
<evidence type="ECO:0000250" key="1">
    <source>
        <dbReference type="UniProtKB" id="Q6NZY4"/>
    </source>
</evidence>
<evidence type="ECO:0000255" key="2"/>
<evidence type="ECO:0000255" key="3">
    <source>
        <dbReference type="PROSITE-ProRule" id="PRU00047"/>
    </source>
</evidence>
<evidence type="ECO:0000256" key="4">
    <source>
        <dbReference type="SAM" id="MobiDB-lite"/>
    </source>
</evidence>
<evidence type="ECO:0000269" key="5">
    <source>
    </source>
</evidence>
<evidence type="ECO:0000305" key="6"/>
<gene>
    <name type="primary">Zcchc8</name>
</gene>
<protein>
    <recommendedName>
        <fullName>Zinc finger CCHC domain-containing protein 8</fullName>
    </recommendedName>
    <alternativeName>
        <fullName>TRAMP-like complex RNA-binding factor ZCCHC8</fullName>
    </alternativeName>
</protein>
<feature type="initiator methionine" description="Removed" evidence="1">
    <location>
        <position position="1"/>
    </location>
</feature>
<feature type="chain" id="PRO_0000150961" description="Zinc finger CCHC domain-containing protein 8">
    <location>
        <begin position="2"/>
        <end position="709"/>
    </location>
</feature>
<feature type="zinc finger region" description="CCHC-type" evidence="3">
    <location>
        <begin position="230"/>
        <end position="247"/>
    </location>
</feature>
<feature type="region of interest" description="Disordered" evidence="4">
    <location>
        <begin position="1"/>
        <end position="47"/>
    </location>
</feature>
<feature type="region of interest" description="RBM7 binding" evidence="1">
    <location>
        <begin position="289"/>
        <end position="302"/>
    </location>
</feature>
<feature type="region of interest" description="RBM7 binding" evidence="1">
    <location>
        <begin position="312"/>
        <end position="327"/>
    </location>
</feature>
<feature type="region of interest" description="Disordered" evidence="4">
    <location>
        <begin position="409"/>
        <end position="518"/>
    </location>
</feature>
<feature type="region of interest" description="Disordered" evidence="4">
    <location>
        <begin position="533"/>
        <end position="667"/>
    </location>
</feature>
<feature type="region of interest" description="MTREX binding" evidence="1">
    <location>
        <begin position="661"/>
        <end position="709"/>
    </location>
</feature>
<feature type="coiled-coil region" evidence="2">
    <location>
        <begin position="48"/>
        <end position="83"/>
    </location>
</feature>
<feature type="compositionally biased region" description="Acidic residues" evidence="4">
    <location>
        <begin position="8"/>
        <end position="20"/>
    </location>
</feature>
<feature type="compositionally biased region" description="Acidic residues" evidence="4">
    <location>
        <begin position="34"/>
        <end position="46"/>
    </location>
</feature>
<feature type="compositionally biased region" description="Low complexity" evidence="4">
    <location>
        <begin position="410"/>
        <end position="430"/>
    </location>
</feature>
<feature type="compositionally biased region" description="Pro residues" evidence="4">
    <location>
        <begin position="468"/>
        <end position="499"/>
    </location>
</feature>
<feature type="compositionally biased region" description="Polar residues" evidence="4">
    <location>
        <begin position="552"/>
        <end position="562"/>
    </location>
</feature>
<feature type="compositionally biased region" description="Polar residues" evidence="4">
    <location>
        <begin position="635"/>
        <end position="645"/>
    </location>
</feature>
<feature type="modified residue" description="N-acetylalanine" evidence="1">
    <location>
        <position position="2"/>
    </location>
</feature>
<feature type="modified residue" description="Phosphothreonine" evidence="1">
    <location>
        <position position="474"/>
    </location>
</feature>
<feature type="modified residue" description="Phosphothreonine" evidence="1">
    <location>
        <position position="482"/>
    </location>
</feature>
<feature type="modified residue" description="Phosphothreonine" evidence="1">
    <location>
        <position position="488"/>
    </location>
</feature>
<feature type="modified residue" description="Phosphothreonine" evidence="1">
    <location>
        <position position="495"/>
    </location>
</feature>
<feature type="modified residue" description="Phosphoserine" evidence="1">
    <location>
        <position position="601"/>
    </location>
</feature>
<feature type="modified residue" description="Phosphoserine" evidence="1">
    <location>
        <position position="660"/>
    </location>
</feature>
<feature type="modified residue" description="Phosphoserine" evidence="1">
    <location>
        <position position="697"/>
    </location>
</feature>
<feature type="sequence conflict" description="In Ref. 1; BAC28304." evidence="6" ref="1">
    <original>A</original>
    <variation>G</variation>
    <location>
        <position position="2"/>
    </location>
</feature>
<feature type="sequence conflict" description="In Ref. 1; BAC28304." evidence="6" ref="1">
    <original>E</original>
    <variation>K</variation>
    <location>
        <position position="11"/>
    </location>
</feature>
<feature type="sequence conflict" description="In Ref. 1; BAC28304." evidence="6" ref="1">
    <original>E</original>
    <variation>G</variation>
    <location>
        <position position="330"/>
    </location>
</feature>
<feature type="sequence conflict" description="In Ref. 1; BAC28304." evidence="6" ref="1">
    <original>H</original>
    <variation>R</variation>
    <location>
        <position position="659"/>
    </location>
</feature>
<feature type="sequence conflict" description="In Ref. 1; BAB30977." evidence="6" ref="1">
    <original>K</original>
    <variation>E</variation>
    <location>
        <position position="695"/>
    </location>
</feature>
<keyword id="KW-0007">Acetylation</keyword>
<keyword id="KW-0175">Coiled coil</keyword>
<keyword id="KW-0479">Metal-binding</keyword>
<keyword id="KW-0507">mRNA processing</keyword>
<keyword id="KW-0508">mRNA splicing</keyword>
<keyword id="KW-0539">Nucleus</keyword>
<keyword id="KW-0597">Phosphoprotein</keyword>
<keyword id="KW-1185">Reference proteome</keyword>
<keyword id="KW-0747">Spliceosome</keyword>
<keyword id="KW-0862">Zinc</keyword>
<keyword id="KW-0863">Zinc-finger</keyword>
<name>ZCHC8_MOUSE</name>